<reference key="1">
    <citation type="submission" date="2005-10" db="EMBL/GenBank/DDBJ databases">
        <title>Complete sequence of chromosome 1 of Burkholderia sp. 383.</title>
        <authorList>
            <consortium name="US DOE Joint Genome Institute"/>
            <person name="Copeland A."/>
            <person name="Lucas S."/>
            <person name="Lapidus A."/>
            <person name="Barry K."/>
            <person name="Detter J.C."/>
            <person name="Glavina T."/>
            <person name="Hammon N."/>
            <person name="Israni S."/>
            <person name="Pitluck S."/>
            <person name="Chain P."/>
            <person name="Malfatti S."/>
            <person name="Shin M."/>
            <person name="Vergez L."/>
            <person name="Schmutz J."/>
            <person name="Larimer F."/>
            <person name="Land M."/>
            <person name="Kyrpides N."/>
            <person name="Lykidis A."/>
            <person name="Richardson P."/>
        </authorList>
    </citation>
    <scope>NUCLEOTIDE SEQUENCE [LARGE SCALE GENOMIC DNA]</scope>
    <source>
        <strain>ATCC 17760 / DSM 23089 / LMG 22485 / NCIMB 9086 / R18194 / 383</strain>
    </source>
</reference>
<feature type="chain" id="PRO_0000230948" description="Transaldolase">
    <location>
        <begin position="1"/>
        <end position="317"/>
    </location>
</feature>
<feature type="active site" description="Schiff-base intermediate with substrate" evidence="2">
    <location>
        <position position="126"/>
    </location>
</feature>
<protein>
    <recommendedName>
        <fullName evidence="2">Transaldolase</fullName>
        <ecNumber evidence="2">2.2.1.2</ecNumber>
    </recommendedName>
</protein>
<accession>Q39E45</accession>
<keyword id="KW-0963">Cytoplasm</keyword>
<keyword id="KW-0570">Pentose shunt</keyword>
<keyword id="KW-0704">Schiff base</keyword>
<keyword id="KW-0808">Transferase</keyword>
<evidence type="ECO:0000250" key="1"/>
<evidence type="ECO:0000255" key="2">
    <source>
        <dbReference type="HAMAP-Rule" id="MF_00492"/>
    </source>
</evidence>
<name>TAL_BURL3</name>
<gene>
    <name evidence="2" type="primary">tal</name>
    <name type="ordered locus">Bcep18194_A5677</name>
</gene>
<dbReference type="EC" id="2.2.1.2" evidence="2"/>
<dbReference type="EMBL" id="CP000151">
    <property type="protein sequence ID" value="ABB09271.1"/>
    <property type="molecule type" value="Genomic_DNA"/>
</dbReference>
<dbReference type="RefSeq" id="WP_011352797.1">
    <property type="nucleotide sequence ID" value="NC_007510.1"/>
</dbReference>
<dbReference type="SMR" id="Q39E45"/>
<dbReference type="GeneID" id="45095564"/>
<dbReference type="KEGG" id="bur:Bcep18194_A5677"/>
<dbReference type="PATRIC" id="fig|482957.22.peg.2653"/>
<dbReference type="HOGENOM" id="CLU_047470_0_1_4"/>
<dbReference type="UniPathway" id="UPA00115">
    <property type="reaction ID" value="UER00414"/>
</dbReference>
<dbReference type="Proteomes" id="UP000002705">
    <property type="component" value="Chromosome 1"/>
</dbReference>
<dbReference type="GO" id="GO:0005737">
    <property type="term" value="C:cytoplasm"/>
    <property type="evidence" value="ECO:0007669"/>
    <property type="project" value="UniProtKB-SubCell"/>
</dbReference>
<dbReference type="GO" id="GO:0004801">
    <property type="term" value="F:transaldolase activity"/>
    <property type="evidence" value="ECO:0000250"/>
    <property type="project" value="UniProtKB"/>
</dbReference>
<dbReference type="GO" id="GO:0005975">
    <property type="term" value="P:carbohydrate metabolic process"/>
    <property type="evidence" value="ECO:0007669"/>
    <property type="project" value="InterPro"/>
</dbReference>
<dbReference type="GO" id="GO:0006098">
    <property type="term" value="P:pentose-phosphate shunt"/>
    <property type="evidence" value="ECO:0007669"/>
    <property type="project" value="UniProtKB-UniRule"/>
</dbReference>
<dbReference type="CDD" id="cd00957">
    <property type="entry name" value="Transaldolase_TalAB"/>
    <property type="match status" value="1"/>
</dbReference>
<dbReference type="FunFam" id="3.20.20.70:FF:000002">
    <property type="entry name" value="Transaldolase"/>
    <property type="match status" value="1"/>
</dbReference>
<dbReference type="Gene3D" id="3.20.20.70">
    <property type="entry name" value="Aldolase class I"/>
    <property type="match status" value="1"/>
</dbReference>
<dbReference type="HAMAP" id="MF_00492">
    <property type="entry name" value="Transaldolase_1"/>
    <property type="match status" value="1"/>
</dbReference>
<dbReference type="InterPro" id="IPR013785">
    <property type="entry name" value="Aldolase_TIM"/>
</dbReference>
<dbReference type="InterPro" id="IPR001585">
    <property type="entry name" value="TAL/FSA"/>
</dbReference>
<dbReference type="InterPro" id="IPR004730">
    <property type="entry name" value="Transaldolase_1"/>
</dbReference>
<dbReference type="InterPro" id="IPR018225">
    <property type="entry name" value="Transaldolase_AS"/>
</dbReference>
<dbReference type="NCBIfam" id="NF009001">
    <property type="entry name" value="PRK12346.1"/>
    <property type="match status" value="1"/>
</dbReference>
<dbReference type="NCBIfam" id="TIGR00874">
    <property type="entry name" value="talAB"/>
    <property type="match status" value="1"/>
</dbReference>
<dbReference type="PANTHER" id="PTHR10683">
    <property type="entry name" value="TRANSALDOLASE"/>
    <property type="match status" value="1"/>
</dbReference>
<dbReference type="PANTHER" id="PTHR10683:SF18">
    <property type="entry name" value="TRANSALDOLASE"/>
    <property type="match status" value="1"/>
</dbReference>
<dbReference type="Pfam" id="PF00923">
    <property type="entry name" value="TAL_FSA"/>
    <property type="match status" value="1"/>
</dbReference>
<dbReference type="SUPFAM" id="SSF51569">
    <property type="entry name" value="Aldolase"/>
    <property type="match status" value="1"/>
</dbReference>
<dbReference type="PROSITE" id="PS01054">
    <property type="entry name" value="TRANSALDOLASE_1"/>
    <property type="match status" value="1"/>
</dbReference>
<dbReference type="PROSITE" id="PS00958">
    <property type="entry name" value="TRANSALDOLASE_2"/>
    <property type="match status" value="1"/>
</dbReference>
<sequence length="317" mass="35236">MTTALDQLKQYTTVVADTGDFQQLAQYQPQDATTNPSLILKAVQKDAYKPILEKTVRDHRNESTDFIIDRLLIAFGTEILKLIPGRVSTEVDARLSFDTPRSIDKGRELIKLYEAAGIGRERILIKLASTWEGIRAAEVLQKEGIKCNMTLLFSLVQAAACAEAGAQLISPFVGRIYDWYKKQAGAEWNEEKDGGANDPGVQSVRRIYTYYKTFGYNTEVMGASFRTTSQITELAGCDLLTISPDLLQKLQDSNDTVTRKLSPDALQDKPAARVAIDEAAFRFQLNDDAMATEKLAEGIRVFAADAVKLEKLIDSLR</sequence>
<proteinExistence type="inferred from homology"/>
<organism>
    <name type="scientific">Burkholderia lata (strain ATCC 17760 / DSM 23089 / LMG 22485 / NCIMB 9086 / R18194 / 383)</name>
    <dbReference type="NCBI Taxonomy" id="482957"/>
    <lineage>
        <taxon>Bacteria</taxon>
        <taxon>Pseudomonadati</taxon>
        <taxon>Pseudomonadota</taxon>
        <taxon>Betaproteobacteria</taxon>
        <taxon>Burkholderiales</taxon>
        <taxon>Burkholderiaceae</taxon>
        <taxon>Burkholderia</taxon>
        <taxon>Burkholderia cepacia complex</taxon>
    </lineage>
</organism>
<comment type="function">
    <text evidence="2">Transaldolase is important for the balance of metabolites in the pentose-phosphate pathway.</text>
</comment>
<comment type="catalytic activity">
    <reaction evidence="2">
        <text>D-sedoheptulose 7-phosphate + D-glyceraldehyde 3-phosphate = D-erythrose 4-phosphate + beta-D-fructose 6-phosphate</text>
        <dbReference type="Rhea" id="RHEA:17053"/>
        <dbReference type="ChEBI" id="CHEBI:16897"/>
        <dbReference type="ChEBI" id="CHEBI:57483"/>
        <dbReference type="ChEBI" id="CHEBI:57634"/>
        <dbReference type="ChEBI" id="CHEBI:59776"/>
        <dbReference type="EC" id="2.2.1.2"/>
    </reaction>
</comment>
<comment type="pathway">
    <text evidence="2">Carbohydrate degradation; pentose phosphate pathway; D-glyceraldehyde 3-phosphate and beta-D-fructose 6-phosphate from D-ribose 5-phosphate and D-xylulose 5-phosphate (non-oxidative stage): step 2/3.</text>
</comment>
<comment type="subunit">
    <text evidence="1">Homodimer.</text>
</comment>
<comment type="subcellular location">
    <subcellularLocation>
        <location evidence="2">Cytoplasm</location>
    </subcellularLocation>
</comment>
<comment type="similarity">
    <text evidence="2">Belongs to the transaldolase family. Type 1 subfamily.</text>
</comment>